<gene>
    <name evidence="1" type="primary">pafA</name>
    <name type="ordered locus">TBMG_01885</name>
</gene>
<dbReference type="EC" id="6.3.1.19" evidence="1"/>
<dbReference type="EMBL" id="CP001658">
    <property type="protein sequence ID" value="ACT24950.1"/>
    <property type="molecule type" value="Genomic_DNA"/>
</dbReference>
<dbReference type="RefSeq" id="WP_003410781.1">
    <property type="nucleotide sequence ID" value="NZ_KK341220.1"/>
</dbReference>
<dbReference type="SMR" id="C6DPW7"/>
<dbReference type="GeneID" id="45426074"/>
<dbReference type="KEGG" id="mtb:TBMG_01885"/>
<dbReference type="PATRIC" id="fig|478434.13.peg.2233"/>
<dbReference type="HOGENOM" id="CLU_040524_0_1_11"/>
<dbReference type="UniPathway" id="UPA00997"/>
<dbReference type="UniPathway" id="UPA00998"/>
<dbReference type="GO" id="GO:0005524">
    <property type="term" value="F:ATP binding"/>
    <property type="evidence" value="ECO:0007669"/>
    <property type="project" value="UniProtKB-UniRule"/>
</dbReference>
<dbReference type="GO" id="GO:0016879">
    <property type="term" value="F:ligase activity, forming carbon-nitrogen bonds"/>
    <property type="evidence" value="ECO:0007669"/>
    <property type="project" value="InterPro"/>
</dbReference>
<dbReference type="GO" id="GO:0000287">
    <property type="term" value="F:magnesium ion binding"/>
    <property type="evidence" value="ECO:0007669"/>
    <property type="project" value="UniProtKB-UniRule"/>
</dbReference>
<dbReference type="GO" id="GO:0019787">
    <property type="term" value="F:ubiquitin-like protein transferase activity"/>
    <property type="evidence" value="ECO:0007669"/>
    <property type="project" value="UniProtKB-UniRule"/>
</dbReference>
<dbReference type="GO" id="GO:0019941">
    <property type="term" value="P:modification-dependent protein catabolic process"/>
    <property type="evidence" value="ECO:0007669"/>
    <property type="project" value="UniProtKB-UniRule"/>
</dbReference>
<dbReference type="GO" id="GO:0010498">
    <property type="term" value="P:proteasomal protein catabolic process"/>
    <property type="evidence" value="ECO:0007669"/>
    <property type="project" value="UniProtKB-UniRule"/>
</dbReference>
<dbReference type="GO" id="GO:0070490">
    <property type="term" value="P:protein pupylation"/>
    <property type="evidence" value="ECO:0007669"/>
    <property type="project" value="UniProtKB-UniRule"/>
</dbReference>
<dbReference type="HAMAP" id="MF_02111">
    <property type="entry name" value="Pup_ligase"/>
    <property type="match status" value="1"/>
</dbReference>
<dbReference type="InterPro" id="IPR022279">
    <property type="entry name" value="Pup_ligase"/>
</dbReference>
<dbReference type="InterPro" id="IPR004347">
    <property type="entry name" value="Pup_ligase/deamidase"/>
</dbReference>
<dbReference type="NCBIfam" id="TIGR03686">
    <property type="entry name" value="pupylate_PafA"/>
    <property type="match status" value="1"/>
</dbReference>
<dbReference type="PANTHER" id="PTHR42307">
    <property type="entry name" value="PUP DEAMIDASE/DEPUPYLASE"/>
    <property type="match status" value="1"/>
</dbReference>
<dbReference type="PANTHER" id="PTHR42307:SF3">
    <property type="entry name" value="PUP--PROTEIN LIGASE"/>
    <property type="match status" value="1"/>
</dbReference>
<dbReference type="Pfam" id="PF03136">
    <property type="entry name" value="Pup_ligase"/>
    <property type="match status" value="1"/>
</dbReference>
<dbReference type="PIRSF" id="PIRSF018077">
    <property type="entry name" value="UCP018077"/>
    <property type="match status" value="1"/>
</dbReference>
<keyword id="KW-0067">ATP-binding</keyword>
<keyword id="KW-0436">Ligase</keyword>
<keyword id="KW-0460">Magnesium</keyword>
<keyword id="KW-0479">Metal-binding</keyword>
<keyword id="KW-0547">Nucleotide-binding</keyword>
<keyword id="KW-0833">Ubl conjugation pathway</keyword>
<feature type="chain" id="PRO_0000395937" description="Pup--protein ligase">
    <location>
        <begin position="1"/>
        <end position="452"/>
    </location>
</feature>
<feature type="active site" description="Proton acceptor" evidence="1">
    <location>
        <position position="57"/>
    </location>
</feature>
<feature type="binding site" evidence="1">
    <location>
        <position position="9"/>
    </location>
    <ligand>
        <name>Mg(2+)</name>
        <dbReference type="ChEBI" id="CHEBI:18420"/>
    </ligand>
</feature>
<feature type="binding site" evidence="1">
    <location>
        <position position="53"/>
    </location>
    <ligand>
        <name>ATP</name>
        <dbReference type="ChEBI" id="CHEBI:30616"/>
    </ligand>
</feature>
<feature type="binding site" evidence="1">
    <location>
        <position position="55"/>
    </location>
    <ligand>
        <name>Mg(2+)</name>
        <dbReference type="ChEBI" id="CHEBI:18420"/>
    </ligand>
</feature>
<feature type="binding site" evidence="1">
    <location>
        <position position="63"/>
    </location>
    <ligand>
        <name>Mg(2+)</name>
        <dbReference type="ChEBI" id="CHEBI:18420"/>
    </ligand>
</feature>
<feature type="binding site" evidence="1">
    <location>
        <position position="66"/>
    </location>
    <ligand>
        <name>ATP</name>
        <dbReference type="ChEBI" id="CHEBI:30616"/>
    </ligand>
</feature>
<feature type="binding site" evidence="1">
    <location>
        <position position="419"/>
    </location>
    <ligand>
        <name>ATP</name>
        <dbReference type="ChEBI" id="CHEBI:30616"/>
    </ligand>
</feature>
<evidence type="ECO:0000255" key="1">
    <source>
        <dbReference type="HAMAP-Rule" id="MF_02111"/>
    </source>
</evidence>
<sequence>MQRRIMGIETEFGVTCTFHGHRRLSPDEVARYLFRRVVSWGRSSNVFLRNGARLYLDVGSHPEYATAECDSLVQLVTHDRAGEWVLEDLLVDAEQRLADEGIGGDIYLFKNNTDSAGNSYGCHENYLIVRAGEFSRISDVLLPFLVTRQLICGAGKVLQTPKAATYCLSQRAEHIWEGVSSATTRSRPIINTRDEPHADAEKYRRLHVIVGDSNMSETTTMLKVGTAALVLEMIESGVAFRDFSLDNPIRAIREVSHDVTGRRPVRLAGGRQASALDIQREYYTRAVEHLQTREPNAQIEQVVDLWGRQLDAVESQDFAKVDTEIDWVIKRKLFQRYQDRYDMELSHPKIAQLDLAYHDIKRGRGIFDLLQRKGLAARVTTDEEIAEAVDQPPQTTRARLRGEFISAAQEAGRDFTVDWVHLKLNDQAQRTVLCKDPFRAVDERVKRLIASM</sequence>
<proteinExistence type="inferred from homology"/>
<comment type="function">
    <text evidence="1">Catalyzes the covalent attachment of the prokaryotic ubiquitin-like protein modifier Pup to the proteasomal substrate proteins, thereby targeting them for proteasomal degradation. This tagging system is termed pupylation. The ligation reaction involves the side-chain carboxylate of the C-terminal glutamate of Pup and the side-chain amino group of a substrate lysine.</text>
</comment>
<comment type="catalytic activity">
    <reaction evidence="1">
        <text>ATP + [prokaryotic ubiquitin-like protein]-L-glutamate + [protein]-L-lysine = ADP + phosphate + N(6)-([prokaryotic ubiquitin-like protein]-gamma-L-glutamyl)-[protein]-L-lysine.</text>
        <dbReference type="EC" id="6.3.1.19"/>
    </reaction>
</comment>
<comment type="pathway">
    <text evidence="1">Protein degradation; proteasomal Pup-dependent pathway.</text>
</comment>
<comment type="pathway">
    <text evidence="1">Protein modification; protein pupylation.</text>
</comment>
<comment type="miscellaneous">
    <text evidence="1">The reaction mechanism probably proceeds via the activation of Pup by phosphorylation of its C-terminal glutamate, which is then subject to nucleophilic attack by the substrate lysine, resulting in an isopeptide bond and the release of phosphate as a good leaving group.</text>
</comment>
<comment type="similarity">
    <text evidence="1">Belongs to the Pup ligase/Pup deamidase family. Pup-conjugating enzyme subfamily.</text>
</comment>
<accession>C6DPW7</accession>
<name>PAFA_MYCTK</name>
<protein>
    <recommendedName>
        <fullName evidence="1">Pup--protein ligase</fullName>
        <ecNumber evidence="1">6.3.1.19</ecNumber>
    </recommendedName>
    <alternativeName>
        <fullName evidence="1">Proteasome accessory factor A</fullName>
    </alternativeName>
    <alternativeName>
        <fullName evidence="1">Pup-conjugating enzyme</fullName>
    </alternativeName>
</protein>
<reference key="1">
    <citation type="submission" date="2009-07" db="EMBL/GenBank/DDBJ databases">
        <title>The genome sequence of Mycobacterium tuberculosis strain KZN 1435.</title>
        <authorList>
            <person name="Murray M."/>
            <person name="Pillay M."/>
            <person name="Borowsky M.L."/>
            <person name="Young S.K."/>
            <person name="Zeng Q."/>
            <person name="Koehrsen M."/>
            <person name="Alvarado L."/>
            <person name="Berlin A.M."/>
            <person name="Borenstein D."/>
            <person name="Chen Z."/>
            <person name="Engels R."/>
            <person name="Freedman E."/>
            <person name="Gellesch M."/>
            <person name="Goldberg J."/>
            <person name="Griggs A."/>
            <person name="Gujja S."/>
            <person name="Heiman D.I."/>
            <person name="Hepburn T.A."/>
            <person name="Howarth C."/>
            <person name="Jen D."/>
            <person name="Larson L."/>
            <person name="Lewis B."/>
            <person name="Mehta T."/>
            <person name="Park D."/>
            <person name="Pearson M."/>
            <person name="Roberts A."/>
            <person name="Saif S."/>
            <person name="Shea T.D."/>
            <person name="Shenoy N."/>
            <person name="Sisk P."/>
            <person name="Stolte C."/>
            <person name="Sykes S.N."/>
            <person name="Walk T."/>
            <person name="White J."/>
            <person name="Yandava C."/>
            <person name="Haas B."/>
            <person name="Nusbaum C."/>
            <person name="Galagan J."/>
            <person name="Birren B."/>
        </authorList>
    </citation>
    <scope>NUCLEOTIDE SEQUENCE [LARGE SCALE GENOMIC DNA]</scope>
    <source>
        <strain>KZN 1435 / MDR</strain>
    </source>
</reference>
<organism>
    <name type="scientific">Mycobacterium tuberculosis (strain KZN 1435 / MDR)</name>
    <dbReference type="NCBI Taxonomy" id="478434"/>
    <lineage>
        <taxon>Bacteria</taxon>
        <taxon>Bacillati</taxon>
        <taxon>Actinomycetota</taxon>
        <taxon>Actinomycetes</taxon>
        <taxon>Mycobacteriales</taxon>
        <taxon>Mycobacteriaceae</taxon>
        <taxon>Mycobacterium</taxon>
        <taxon>Mycobacterium tuberculosis complex</taxon>
    </lineage>
</organism>